<evidence type="ECO:0000250" key="1">
    <source>
        <dbReference type="UniProtKB" id="Q91ZD1"/>
    </source>
</evidence>
<evidence type="ECO:0000255" key="2">
    <source>
        <dbReference type="PROSITE-ProRule" id="PRU00042"/>
    </source>
</evidence>
<evidence type="ECO:0000256" key="3">
    <source>
        <dbReference type="SAM" id="MobiDB-lite"/>
    </source>
</evidence>
<evidence type="ECO:0000305" key="4"/>
<evidence type="ECO:0000312" key="5">
    <source>
        <dbReference type="RGD" id="1305812"/>
    </source>
</evidence>
<keyword id="KW-0479">Metal-binding</keyword>
<keyword id="KW-0539">Nucleus</keyword>
<keyword id="KW-1185">Reference proteome</keyword>
<keyword id="KW-0677">Repeat</keyword>
<keyword id="KW-0862">Zinc</keyword>
<keyword id="KW-0863">Zinc-finger</keyword>
<proteinExistence type="evidence at transcript level"/>
<dbReference type="EMBL" id="BC079211">
    <property type="protein sequence ID" value="AAH79211.1"/>
    <property type="molecule type" value="mRNA"/>
</dbReference>
<dbReference type="RefSeq" id="NP_001012118.1">
    <property type="nucleotide sequence ID" value="NM_001012118.2"/>
</dbReference>
<dbReference type="BMRB" id="Q6AY34"/>
<dbReference type="SMR" id="Q6AY34"/>
<dbReference type="FunCoup" id="Q6AY34">
    <property type="interactions" value="106"/>
</dbReference>
<dbReference type="STRING" id="10116.ENSRNOP00000014879"/>
<dbReference type="PhosphoSitePlus" id="Q6AY34"/>
<dbReference type="PaxDb" id="10116-ENSRNOP00000014879"/>
<dbReference type="Ensembl" id="ENSRNOT00000014879.7">
    <property type="protein sequence ID" value="ENSRNOP00000014879.4"/>
    <property type="gene ID" value="ENSRNOG00000011136.7"/>
</dbReference>
<dbReference type="GeneID" id="315039"/>
<dbReference type="KEGG" id="rno:315039"/>
<dbReference type="UCSC" id="RGD:1305812">
    <property type="organism name" value="rat"/>
</dbReference>
<dbReference type="AGR" id="RGD:1305812"/>
<dbReference type="CTD" id="116039"/>
<dbReference type="RGD" id="1305812">
    <property type="gene designation" value="Osr2"/>
</dbReference>
<dbReference type="eggNOG" id="KOG1721">
    <property type="taxonomic scope" value="Eukaryota"/>
</dbReference>
<dbReference type="GeneTree" id="ENSGT00940000160530"/>
<dbReference type="HOGENOM" id="CLU_051854_0_0_1"/>
<dbReference type="InParanoid" id="Q6AY34"/>
<dbReference type="OMA" id="CTHRARK"/>
<dbReference type="OrthoDB" id="9451254at2759"/>
<dbReference type="PhylomeDB" id="Q6AY34"/>
<dbReference type="TreeFam" id="TF350876"/>
<dbReference type="PRO" id="PR:Q6AY34"/>
<dbReference type="Proteomes" id="UP000002494">
    <property type="component" value="Chromosome 7"/>
</dbReference>
<dbReference type="Bgee" id="ENSRNOG00000011136">
    <property type="expression patterns" value="Expressed in ovary and 11 other cell types or tissues"/>
</dbReference>
<dbReference type="GO" id="GO:0005634">
    <property type="term" value="C:nucleus"/>
    <property type="evidence" value="ECO:0000250"/>
    <property type="project" value="UniProtKB"/>
</dbReference>
<dbReference type="GO" id="GO:0001228">
    <property type="term" value="F:DNA-binding transcription activator activity, RNA polymerase II-specific"/>
    <property type="evidence" value="ECO:0000266"/>
    <property type="project" value="RGD"/>
</dbReference>
<dbReference type="GO" id="GO:0000981">
    <property type="term" value="F:DNA-binding transcription factor activity, RNA polymerase II-specific"/>
    <property type="evidence" value="ECO:0000318"/>
    <property type="project" value="GO_Central"/>
</dbReference>
<dbReference type="GO" id="GO:0000977">
    <property type="term" value="F:RNA polymerase II transcription regulatory region sequence-specific DNA binding"/>
    <property type="evidence" value="ECO:0000266"/>
    <property type="project" value="RGD"/>
</dbReference>
<dbReference type="GO" id="GO:0043565">
    <property type="term" value="F:sequence-specific DNA binding"/>
    <property type="evidence" value="ECO:0000250"/>
    <property type="project" value="UniProtKB"/>
</dbReference>
<dbReference type="GO" id="GO:1990837">
    <property type="term" value="F:sequence-specific double-stranded DNA binding"/>
    <property type="evidence" value="ECO:0000266"/>
    <property type="project" value="RGD"/>
</dbReference>
<dbReference type="GO" id="GO:0008270">
    <property type="term" value="F:zinc ion binding"/>
    <property type="evidence" value="ECO:0007669"/>
    <property type="project" value="UniProtKB-KW"/>
</dbReference>
<dbReference type="GO" id="GO:0060349">
    <property type="term" value="P:bone morphogenesis"/>
    <property type="evidence" value="ECO:0000250"/>
    <property type="project" value="UniProtKB"/>
</dbReference>
<dbReference type="GO" id="GO:0030154">
    <property type="term" value="P:cell differentiation"/>
    <property type="evidence" value="ECO:0000266"/>
    <property type="project" value="RGD"/>
</dbReference>
<dbReference type="GO" id="GO:0008283">
    <property type="term" value="P:cell population proliferation"/>
    <property type="evidence" value="ECO:0000266"/>
    <property type="project" value="RGD"/>
</dbReference>
<dbReference type="GO" id="GO:0002062">
    <property type="term" value="P:chondrocyte differentiation"/>
    <property type="evidence" value="ECO:0000266"/>
    <property type="project" value="RGD"/>
</dbReference>
<dbReference type="GO" id="GO:0009792">
    <property type="term" value="P:embryo development ending in birth or egg hatching"/>
    <property type="evidence" value="ECO:0000250"/>
    <property type="project" value="UniProtKB"/>
</dbReference>
<dbReference type="GO" id="GO:0042733">
    <property type="term" value="P:embryonic digit morphogenesis"/>
    <property type="evidence" value="ECO:0000266"/>
    <property type="project" value="RGD"/>
</dbReference>
<dbReference type="GO" id="GO:0035115">
    <property type="term" value="P:embryonic forelimb morphogenesis"/>
    <property type="evidence" value="ECO:0000266"/>
    <property type="project" value="RGD"/>
</dbReference>
<dbReference type="GO" id="GO:0035116">
    <property type="term" value="P:embryonic hindlimb morphogenesis"/>
    <property type="evidence" value="ECO:0000266"/>
    <property type="project" value="RGD"/>
</dbReference>
<dbReference type="GO" id="GO:0072498">
    <property type="term" value="P:embryonic skeletal joint development"/>
    <property type="evidence" value="ECO:0000266"/>
    <property type="project" value="RGD"/>
</dbReference>
<dbReference type="GO" id="GO:0060272">
    <property type="term" value="P:embryonic skeletal joint morphogenesis"/>
    <property type="evidence" value="ECO:0000266"/>
    <property type="project" value="RGD"/>
</dbReference>
<dbReference type="GO" id="GO:0036023">
    <property type="term" value="P:embryonic skeletal limb joint morphogenesis"/>
    <property type="evidence" value="ECO:0000266"/>
    <property type="project" value="RGD"/>
</dbReference>
<dbReference type="GO" id="GO:0048704">
    <property type="term" value="P:embryonic skeletal system morphogenesis"/>
    <property type="evidence" value="ECO:0000250"/>
    <property type="project" value="UniProtKB"/>
</dbReference>
<dbReference type="GO" id="GO:0061029">
    <property type="term" value="P:eyelid development in camera-type eye"/>
    <property type="evidence" value="ECO:0000250"/>
    <property type="project" value="UniProtKB"/>
</dbReference>
<dbReference type="GO" id="GO:0060322">
    <property type="term" value="P:head development"/>
    <property type="evidence" value="ECO:0000266"/>
    <property type="project" value="RGD"/>
</dbReference>
<dbReference type="GO" id="GO:0001823">
    <property type="term" value="P:mesonephros development"/>
    <property type="evidence" value="ECO:0000250"/>
    <property type="project" value="UniProtKB"/>
</dbReference>
<dbReference type="GO" id="GO:0001656">
    <property type="term" value="P:metanephros development"/>
    <property type="evidence" value="ECO:0000250"/>
    <property type="project" value="UniProtKB"/>
</dbReference>
<dbReference type="GO" id="GO:0042474">
    <property type="term" value="P:middle ear morphogenesis"/>
    <property type="evidence" value="ECO:0000250"/>
    <property type="project" value="UniProtKB"/>
</dbReference>
<dbReference type="GO" id="GO:0000122">
    <property type="term" value="P:negative regulation of transcription by RNA polymerase II"/>
    <property type="evidence" value="ECO:0000266"/>
    <property type="project" value="RGD"/>
</dbReference>
<dbReference type="GO" id="GO:0042476">
    <property type="term" value="P:odontogenesis"/>
    <property type="evidence" value="ECO:0000250"/>
    <property type="project" value="UniProtKB"/>
</dbReference>
<dbReference type="GO" id="GO:0033687">
    <property type="term" value="P:osteoblast proliferation"/>
    <property type="evidence" value="ECO:0000250"/>
    <property type="project" value="UniProtKB"/>
</dbReference>
<dbReference type="GO" id="GO:0007389">
    <property type="term" value="P:pattern specification process"/>
    <property type="evidence" value="ECO:0000318"/>
    <property type="project" value="GO_Central"/>
</dbReference>
<dbReference type="GO" id="GO:0030501">
    <property type="term" value="P:positive regulation of bone mineralization"/>
    <property type="evidence" value="ECO:0000266"/>
    <property type="project" value="RGD"/>
</dbReference>
<dbReference type="GO" id="GO:0008284">
    <property type="term" value="P:positive regulation of cell population proliferation"/>
    <property type="evidence" value="ECO:0000250"/>
    <property type="project" value="UniProtKB"/>
</dbReference>
<dbReference type="GO" id="GO:0045893">
    <property type="term" value="P:positive regulation of DNA-templated transcription"/>
    <property type="evidence" value="ECO:0000250"/>
    <property type="project" value="UniProtKB"/>
</dbReference>
<dbReference type="GO" id="GO:0050679">
    <property type="term" value="P:positive regulation of epithelial cell proliferation"/>
    <property type="evidence" value="ECO:0000250"/>
    <property type="project" value="UniProtKB"/>
</dbReference>
<dbReference type="GO" id="GO:0010628">
    <property type="term" value="P:positive regulation of gene expression"/>
    <property type="evidence" value="ECO:0000250"/>
    <property type="project" value="UniProtKB"/>
</dbReference>
<dbReference type="GO" id="GO:2000648">
    <property type="term" value="P:positive regulation of stem cell proliferation"/>
    <property type="evidence" value="ECO:0000266"/>
    <property type="project" value="RGD"/>
</dbReference>
<dbReference type="GO" id="GO:0045944">
    <property type="term" value="P:positive regulation of transcription by RNA polymerase II"/>
    <property type="evidence" value="ECO:0000266"/>
    <property type="project" value="RGD"/>
</dbReference>
<dbReference type="GO" id="GO:0048793">
    <property type="term" value="P:pronephros development"/>
    <property type="evidence" value="ECO:0000318"/>
    <property type="project" value="GO_Central"/>
</dbReference>
<dbReference type="GO" id="GO:0060021">
    <property type="term" value="P:roof of mouth development"/>
    <property type="evidence" value="ECO:0000250"/>
    <property type="project" value="UniProtKB"/>
</dbReference>
<dbReference type="GO" id="GO:0072089">
    <property type="term" value="P:stem cell proliferation"/>
    <property type="evidence" value="ECO:0000266"/>
    <property type="project" value="RGD"/>
</dbReference>
<dbReference type="GO" id="GO:0001655">
    <property type="term" value="P:urogenital system development"/>
    <property type="evidence" value="ECO:0000318"/>
    <property type="project" value="GO_Central"/>
</dbReference>
<dbReference type="FunFam" id="3.30.160.60:FF:000254">
    <property type="entry name" value="Odd-skipped related transciption factor 1"/>
    <property type="match status" value="1"/>
</dbReference>
<dbReference type="FunFam" id="3.30.160.60:FF:000090">
    <property type="entry name" value="Odd-skipped-related transciption factor 2"/>
    <property type="match status" value="1"/>
</dbReference>
<dbReference type="FunFam" id="3.30.160.60:FF:000311">
    <property type="entry name" value="protein odd-skipped-related 2 isoform X1"/>
    <property type="match status" value="1"/>
</dbReference>
<dbReference type="Gene3D" id="3.30.160.60">
    <property type="entry name" value="Classic Zinc Finger"/>
    <property type="match status" value="3"/>
</dbReference>
<dbReference type="InterPro" id="IPR050717">
    <property type="entry name" value="C2H2-ZF_Transcription_Reg"/>
</dbReference>
<dbReference type="InterPro" id="IPR036236">
    <property type="entry name" value="Znf_C2H2_sf"/>
</dbReference>
<dbReference type="InterPro" id="IPR013087">
    <property type="entry name" value="Znf_C2H2_type"/>
</dbReference>
<dbReference type="PANTHER" id="PTHR14196">
    <property type="entry name" value="ODD-SKIPPED - RELATED"/>
    <property type="match status" value="1"/>
</dbReference>
<dbReference type="PANTHER" id="PTHR14196:SF4">
    <property type="entry name" value="PROTEIN ODD-SKIPPED-RELATED 2"/>
    <property type="match status" value="1"/>
</dbReference>
<dbReference type="Pfam" id="PF00096">
    <property type="entry name" value="zf-C2H2"/>
    <property type="match status" value="3"/>
</dbReference>
<dbReference type="SMART" id="SM00355">
    <property type="entry name" value="ZnF_C2H2"/>
    <property type="match status" value="3"/>
</dbReference>
<dbReference type="SUPFAM" id="SSF57667">
    <property type="entry name" value="beta-beta-alpha zinc fingers"/>
    <property type="match status" value="2"/>
</dbReference>
<dbReference type="PROSITE" id="PS00028">
    <property type="entry name" value="ZINC_FINGER_C2H2_1"/>
    <property type="match status" value="3"/>
</dbReference>
<dbReference type="PROSITE" id="PS50157">
    <property type="entry name" value="ZINC_FINGER_C2H2_2"/>
    <property type="match status" value="3"/>
</dbReference>
<reference key="1">
    <citation type="journal article" date="2004" name="Genome Res.">
        <title>The status, quality, and expansion of the NIH full-length cDNA project: the Mammalian Gene Collection (MGC).</title>
        <authorList>
            <consortium name="The MGC Project Team"/>
        </authorList>
    </citation>
    <scope>NUCLEOTIDE SEQUENCE [LARGE SCALE MRNA]</scope>
    <source>
        <tissue>Testis</tissue>
    </source>
</reference>
<sequence>MGSKALPAPIPLHPSLQLTNYSFLQAVNTFPAAVDHLQGLYGLSAVQTMHMNHWTLGYPNVHEITRSTITEMAAAQGLVDARFPFPALPFATHLFHPKQGAIAHVLPALHKDRPRFDFANLAVAATQEDPPKMGDLSKLSPGLGSPISGLSKLTPDRKPSRGRLPSKTKKEFICKFCGRHFTKSYNLLIHERTHTDERPYTCDICHKAFRRQDHLRDHRYIHSKEKPFKCQECGKGFCQSRTLAVHKTLHMQTSSPTAASSAAKCSGETVICGGTA</sequence>
<organism>
    <name type="scientific">Rattus norvegicus</name>
    <name type="common">Rat</name>
    <dbReference type="NCBI Taxonomy" id="10116"/>
    <lineage>
        <taxon>Eukaryota</taxon>
        <taxon>Metazoa</taxon>
        <taxon>Chordata</taxon>
        <taxon>Craniata</taxon>
        <taxon>Vertebrata</taxon>
        <taxon>Euteleostomi</taxon>
        <taxon>Mammalia</taxon>
        <taxon>Eutheria</taxon>
        <taxon>Euarchontoglires</taxon>
        <taxon>Glires</taxon>
        <taxon>Rodentia</taxon>
        <taxon>Myomorpha</taxon>
        <taxon>Muroidea</taxon>
        <taxon>Muridae</taxon>
        <taxon>Murinae</taxon>
        <taxon>Rattus</taxon>
    </lineage>
</organism>
<comment type="function">
    <text evidence="1">May be involved in the development of the mandibular molar tooth germ at the bud stage.</text>
</comment>
<comment type="subcellular location">
    <subcellularLocation>
        <location evidence="4">Nucleus</location>
    </subcellularLocation>
</comment>
<comment type="similarity">
    <text evidence="4">Belongs to the Odd C2H2-type zinc-finger protein family.</text>
</comment>
<gene>
    <name evidence="5" type="primary">Osr2</name>
</gene>
<accession>Q6AY34</accession>
<name>OSR2_RAT</name>
<protein>
    <recommendedName>
        <fullName evidence="4">Protein odd-skipped-related 2</fullName>
    </recommendedName>
</protein>
<feature type="chain" id="PRO_0000047009" description="Protein odd-skipped-related 2">
    <location>
        <begin position="1"/>
        <end position="276"/>
    </location>
</feature>
<feature type="zinc finger region" description="C2H2-type 1" evidence="2">
    <location>
        <begin position="172"/>
        <end position="194"/>
    </location>
</feature>
<feature type="zinc finger region" description="C2H2-type 2" evidence="2">
    <location>
        <begin position="200"/>
        <end position="222"/>
    </location>
</feature>
<feature type="zinc finger region" description="C2H2-type 3" evidence="2">
    <location>
        <begin position="228"/>
        <end position="250"/>
    </location>
</feature>
<feature type="region of interest" description="Disordered" evidence="3">
    <location>
        <begin position="129"/>
        <end position="165"/>
    </location>
</feature>
<feature type="compositionally biased region" description="Low complexity" evidence="3">
    <location>
        <begin position="136"/>
        <end position="153"/>
    </location>
</feature>